<name>Y4079_MYCPA</name>
<comment type="function">
    <text evidence="1">Exhibits S-adenosyl-L-methionine-dependent methyltransferase activity.</text>
</comment>
<comment type="similarity">
    <text evidence="3">Belongs to the UPF0677 family.</text>
</comment>
<comment type="sequence caution" evidence="3">
    <conflict type="frameshift">
        <sequence resource="EMBL-CDS" id="AAS06629"/>
    </conflict>
</comment>
<sequence>MSTARSDDDSWEITESVGATALGVASARAAETRSENPLIKDPFAQVFLDAAGDGVWNWHSAPQLPPELIEAEPTIPLQQQAMVGYMASRTAFFDSFFLEATGAGIRQAVILAAGLDARSWRLPWPAGTTVYELDQPRVLEFKESTLAEHGAQPACNRVAVPVDLRHDWPEALRQAGFDASAPSVWSAEGLMPYLPAAAQDLLFDRIQGLTVAGSRVAVEALGPKFLDPQARAKRRERMDRIQALMARIDPDRAVPRTDELWYFEEREDVGEWFGRHGWDVRVTPSDELMAGYGRGRRRPRSATSCRGTCSSPRSGGRPEGLAFRQGESRARRHRRDVAGQHGFGNQCGGPDCGSAQHRRAQVDHPAQQRGFSDDAPDAAPAERGEPGERGGQVVRLVDARGQHRGVLEPLATALTQVRAHRMSRVADHHDGPARPGPGGGAVVKVVAQHLVAGRRCQHPRNRFGPIGESCLQIGQFAARRELPFRSALGGEPIQAIRTHRHMAGFDAGTKCLAGQLGVHRRSPHRAMRCSRRTGRRAGR</sequence>
<feature type="chain" id="PRO_0000361186" description="Putative S-adenosyl-L-methionine-dependent methyltransferase MAP_4079">
    <location>
        <begin position="1"/>
        <end position="539"/>
    </location>
</feature>
<feature type="region of interest" description="Disordered" evidence="2">
    <location>
        <begin position="290"/>
        <end position="392"/>
    </location>
</feature>
<feature type="compositionally biased region" description="Polar residues" evidence="2">
    <location>
        <begin position="301"/>
        <end position="313"/>
    </location>
</feature>
<feature type="compositionally biased region" description="Gly residues" evidence="2">
    <location>
        <begin position="341"/>
        <end position="351"/>
    </location>
</feature>
<feature type="binding site" evidence="1">
    <location>
        <position position="134"/>
    </location>
    <ligand>
        <name>S-adenosyl-L-methionine</name>
        <dbReference type="ChEBI" id="CHEBI:59789"/>
    </ligand>
</feature>
<feature type="binding site" evidence="1">
    <location>
        <begin position="163"/>
        <end position="164"/>
    </location>
    <ligand>
        <name>S-adenosyl-L-methionine</name>
        <dbReference type="ChEBI" id="CHEBI:59789"/>
    </ligand>
</feature>
<protein>
    <recommendedName>
        <fullName>Putative S-adenosyl-L-methionine-dependent methyltransferase MAP_4079</fullName>
        <ecNumber>2.1.1.-</ecNumber>
    </recommendedName>
</protein>
<reference key="1">
    <citation type="journal article" date="2005" name="Proc. Natl. Acad. Sci. U.S.A.">
        <title>The complete genome sequence of Mycobacterium avium subspecies paratuberculosis.</title>
        <authorList>
            <person name="Li L."/>
            <person name="Bannantine J.P."/>
            <person name="Zhang Q."/>
            <person name="Amonsin A."/>
            <person name="May B.J."/>
            <person name="Alt D."/>
            <person name="Banerji N."/>
            <person name="Kanjilal S."/>
            <person name="Kapur V."/>
        </authorList>
    </citation>
    <scope>NUCLEOTIDE SEQUENCE [LARGE SCALE GENOMIC DNA]</scope>
    <source>
        <strain>ATCC BAA-968 / K-10</strain>
    </source>
</reference>
<keyword id="KW-0489">Methyltransferase</keyword>
<keyword id="KW-1185">Reference proteome</keyword>
<keyword id="KW-0949">S-adenosyl-L-methionine</keyword>
<keyword id="KW-0808">Transferase</keyword>
<dbReference type="EC" id="2.1.1.-"/>
<dbReference type="EMBL" id="AE016958">
    <property type="protein sequence ID" value="AAS06629.1"/>
    <property type="status" value="ALT_FRAME"/>
    <property type="molecule type" value="Genomic_DNA"/>
</dbReference>
<dbReference type="SMR" id="Q73SJ4"/>
<dbReference type="STRING" id="262316.MAP_4079"/>
<dbReference type="KEGG" id="mpa:MAP_4079"/>
<dbReference type="eggNOG" id="COG3315">
    <property type="taxonomic scope" value="Bacteria"/>
</dbReference>
<dbReference type="HOGENOM" id="CLU_562376_0_0_11"/>
<dbReference type="Proteomes" id="UP000000580">
    <property type="component" value="Chromosome"/>
</dbReference>
<dbReference type="GO" id="GO:0008168">
    <property type="term" value="F:methyltransferase activity"/>
    <property type="evidence" value="ECO:0007669"/>
    <property type="project" value="UniProtKB-KW"/>
</dbReference>
<dbReference type="GO" id="GO:0032259">
    <property type="term" value="P:methylation"/>
    <property type="evidence" value="ECO:0007669"/>
    <property type="project" value="UniProtKB-KW"/>
</dbReference>
<dbReference type="Gene3D" id="3.40.50.150">
    <property type="entry name" value="Vaccinia Virus protein VP39"/>
    <property type="match status" value="1"/>
</dbReference>
<dbReference type="InterPro" id="IPR007213">
    <property type="entry name" value="Ppm1/Ppm2/Tcmp"/>
</dbReference>
<dbReference type="InterPro" id="IPR029063">
    <property type="entry name" value="SAM-dependent_MTases_sf"/>
</dbReference>
<dbReference type="InterPro" id="IPR011610">
    <property type="entry name" value="SAM_mthyl_Trfase_ML2640-like"/>
</dbReference>
<dbReference type="NCBIfam" id="TIGR00027">
    <property type="entry name" value="mthyl_TIGR00027"/>
    <property type="match status" value="1"/>
</dbReference>
<dbReference type="PANTHER" id="PTHR43619">
    <property type="entry name" value="S-ADENOSYL-L-METHIONINE-DEPENDENT METHYLTRANSFERASE YKTD-RELATED"/>
    <property type="match status" value="1"/>
</dbReference>
<dbReference type="PANTHER" id="PTHR43619:SF2">
    <property type="entry name" value="S-ADENOSYL-L-METHIONINE-DEPENDENT METHYLTRANSFERASES SUPERFAMILY PROTEIN"/>
    <property type="match status" value="1"/>
</dbReference>
<dbReference type="Pfam" id="PF04072">
    <property type="entry name" value="LCM"/>
    <property type="match status" value="1"/>
</dbReference>
<dbReference type="SUPFAM" id="SSF53335">
    <property type="entry name" value="S-adenosyl-L-methionine-dependent methyltransferases"/>
    <property type="match status" value="1"/>
</dbReference>
<organism>
    <name type="scientific">Mycolicibacterium paratuberculosis (strain ATCC BAA-968 / K-10)</name>
    <name type="common">Mycobacterium paratuberculosis</name>
    <dbReference type="NCBI Taxonomy" id="262316"/>
    <lineage>
        <taxon>Bacteria</taxon>
        <taxon>Bacillati</taxon>
        <taxon>Actinomycetota</taxon>
        <taxon>Actinomycetes</taxon>
        <taxon>Mycobacteriales</taxon>
        <taxon>Mycobacteriaceae</taxon>
        <taxon>Mycobacterium</taxon>
        <taxon>Mycobacterium avium complex (MAC)</taxon>
    </lineage>
</organism>
<accession>Q73SJ4</accession>
<evidence type="ECO:0000250" key="1"/>
<evidence type="ECO:0000256" key="2">
    <source>
        <dbReference type="SAM" id="MobiDB-lite"/>
    </source>
</evidence>
<evidence type="ECO:0000305" key="3"/>
<gene>
    <name type="ordered locus">MAP_4079</name>
</gene>
<proteinExistence type="inferred from homology"/>